<comment type="catalytic activity">
    <reaction evidence="1">
        <text>CMP + ATP = CDP + ADP</text>
        <dbReference type="Rhea" id="RHEA:11600"/>
        <dbReference type="ChEBI" id="CHEBI:30616"/>
        <dbReference type="ChEBI" id="CHEBI:58069"/>
        <dbReference type="ChEBI" id="CHEBI:60377"/>
        <dbReference type="ChEBI" id="CHEBI:456216"/>
        <dbReference type="EC" id="2.7.4.25"/>
    </reaction>
</comment>
<comment type="catalytic activity">
    <reaction evidence="1">
        <text>dCMP + ATP = dCDP + ADP</text>
        <dbReference type="Rhea" id="RHEA:25094"/>
        <dbReference type="ChEBI" id="CHEBI:30616"/>
        <dbReference type="ChEBI" id="CHEBI:57566"/>
        <dbReference type="ChEBI" id="CHEBI:58593"/>
        <dbReference type="ChEBI" id="CHEBI:456216"/>
        <dbReference type="EC" id="2.7.4.25"/>
    </reaction>
</comment>
<comment type="subcellular location">
    <subcellularLocation>
        <location evidence="1">Cytoplasm</location>
    </subcellularLocation>
</comment>
<comment type="similarity">
    <text evidence="1">Belongs to the cytidylate kinase family. Type 1 subfamily.</text>
</comment>
<name>KCY_GEOTN</name>
<gene>
    <name evidence="1" type="primary">cmk</name>
    <name type="ordered locus">GTNG_2163</name>
</gene>
<evidence type="ECO:0000255" key="1">
    <source>
        <dbReference type="HAMAP-Rule" id="MF_00238"/>
    </source>
</evidence>
<dbReference type="EC" id="2.7.4.25" evidence="1"/>
<dbReference type="EMBL" id="CP000557">
    <property type="protein sequence ID" value="ABO67512.1"/>
    <property type="molecule type" value="Genomic_DNA"/>
</dbReference>
<dbReference type="RefSeq" id="WP_008879640.1">
    <property type="nucleotide sequence ID" value="NC_009328.1"/>
</dbReference>
<dbReference type="SMR" id="A4IQA8"/>
<dbReference type="GeneID" id="87623735"/>
<dbReference type="KEGG" id="gtn:GTNG_2163"/>
<dbReference type="eggNOG" id="COG0283">
    <property type="taxonomic scope" value="Bacteria"/>
</dbReference>
<dbReference type="HOGENOM" id="CLU_079959_0_2_9"/>
<dbReference type="Proteomes" id="UP000001578">
    <property type="component" value="Chromosome"/>
</dbReference>
<dbReference type="GO" id="GO:0005829">
    <property type="term" value="C:cytosol"/>
    <property type="evidence" value="ECO:0007669"/>
    <property type="project" value="TreeGrafter"/>
</dbReference>
<dbReference type="GO" id="GO:0005524">
    <property type="term" value="F:ATP binding"/>
    <property type="evidence" value="ECO:0007669"/>
    <property type="project" value="UniProtKB-UniRule"/>
</dbReference>
<dbReference type="GO" id="GO:0036430">
    <property type="term" value="F:CMP kinase activity"/>
    <property type="evidence" value="ECO:0007669"/>
    <property type="project" value="RHEA"/>
</dbReference>
<dbReference type="GO" id="GO:0036431">
    <property type="term" value="F:dCMP kinase activity"/>
    <property type="evidence" value="ECO:0007669"/>
    <property type="project" value="RHEA"/>
</dbReference>
<dbReference type="GO" id="GO:0015949">
    <property type="term" value="P:nucleobase-containing small molecule interconversion"/>
    <property type="evidence" value="ECO:0007669"/>
    <property type="project" value="TreeGrafter"/>
</dbReference>
<dbReference type="GO" id="GO:0006220">
    <property type="term" value="P:pyrimidine nucleotide metabolic process"/>
    <property type="evidence" value="ECO:0007669"/>
    <property type="project" value="UniProtKB-UniRule"/>
</dbReference>
<dbReference type="CDD" id="cd02020">
    <property type="entry name" value="CMPK"/>
    <property type="match status" value="1"/>
</dbReference>
<dbReference type="FunFam" id="3.40.50.300:FF:000484">
    <property type="entry name" value="Cytidylate kinase"/>
    <property type="match status" value="1"/>
</dbReference>
<dbReference type="Gene3D" id="3.40.50.300">
    <property type="entry name" value="P-loop containing nucleotide triphosphate hydrolases"/>
    <property type="match status" value="1"/>
</dbReference>
<dbReference type="HAMAP" id="MF_00238">
    <property type="entry name" value="Cytidyl_kinase_type1"/>
    <property type="match status" value="1"/>
</dbReference>
<dbReference type="InterPro" id="IPR003136">
    <property type="entry name" value="Cytidylate_kin"/>
</dbReference>
<dbReference type="InterPro" id="IPR011994">
    <property type="entry name" value="Cytidylate_kinase_dom"/>
</dbReference>
<dbReference type="InterPro" id="IPR027417">
    <property type="entry name" value="P-loop_NTPase"/>
</dbReference>
<dbReference type="NCBIfam" id="TIGR00017">
    <property type="entry name" value="cmk"/>
    <property type="match status" value="1"/>
</dbReference>
<dbReference type="PANTHER" id="PTHR21299:SF2">
    <property type="entry name" value="CYTIDYLATE KINASE"/>
    <property type="match status" value="1"/>
</dbReference>
<dbReference type="PANTHER" id="PTHR21299">
    <property type="entry name" value="CYTIDYLATE KINASE/PANTOATE-BETA-ALANINE LIGASE"/>
    <property type="match status" value="1"/>
</dbReference>
<dbReference type="Pfam" id="PF02224">
    <property type="entry name" value="Cytidylate_kin"/>
    <property type="match status" value="1"/>
</dbReference>
<dbReference type="SUPFAM" id="SSF52540">
    <property type="entry name" value="P-loop containing nucleoside triphosphate hydrolases"/>
    <property type="match status" value="1"/>
</dbReference>
<keyword id="KW-0067">ATP-binding</keyword>
<keyword id="KW-0963">Cytoplasm</keyword>
<keyword id="KW-0418">Kinase</keyword>
<keyword id="KW-0547">Nucleotide-binding</keyword>
<keyword id="KW-0808">Transferase</keyword>
<accession>A4IQA8</accession>
<proteinExistence type="inferred from homology"/>
<sequence length="224" mass="24644">MERRICIAIDGPAAAGKSTVAKLIANRLSYVYIDTGAMYRALTYRALQCGVDIHDEQALLSLLGDTSIELKPSPQGQLVFVNGEDVTDIIRGEAVTNAVSFVAKHPLVREEMVARQRALAEGGGVVMDGRDIGTNVLPNAEVKIFLKASVEERARRRHEENIARGFPSDLEKLKEEIAHRDRIDSERETAPLRKAPDAVEIDTTSLTVEEVAARIMEIVNERIG</sequence>
<feature type="chain" id="PRO_1000048222" description="Cytidylate kinase">
    <location>
        <begin position="1"/>
        <end position="224"/>
    </location>
</feature>
<feature type="binding site" evidence="1">
    <location>
        <begin position="11"/>
        <end position="19"/>
    </location>
    <ligand>
        <name>ATP</name>
        <dbReference type="ChEBI" id="CHEBI:30616"/>
    </ligand>
</feature>
<protein>
    <recommendedName>
        <fullName evidence="1">Cytidylate kinase</fullName>
        <shortName evidence="1">CK</shortName>
        <ecNumber evidence="1">2.7.4.25</ecNumber>
    </recommendedName>
    <alternativeName>
        <fullName evidence="1">Cytidine monophosphate kinase</fullName>
        <shortName evidence="1">CMP kinase</shortName>
    </alternativeName>
</protein>
<reference key="1">
    <citation type="journal article" date="2007" name="Proc. Natl. Acad. Sci. U.S.A.">
        <title>Genome and proteome of long-chain alkane degrading Geobacillus thermodenitrificans NG80-2 isolated from a deep-subsurface oil reservoir.</title>
        <authorList>
            <person name="Feng L."/>
            <person name="Wang W."/>
            <person name="Cheng J."/>
            <person name="Ren Y."/>
            <person name="Zhao G."/>
            <person name="Gao C."/>
            <person name="Tang Y."/>
            <person name="Liu X."/>
            <person name="Han W."/>
            <person name="Peng X."/>
            <person name="Liu R."/>
            <person name="Wang L."/>
        </authorList>
    </citation>
    <scope>NUCLEOTIDE SEQUENCE [LARGE SCALE GENOMIC DNA]</scope>
    <source>
        <strain>NG80-2</strain>
    </source>
</reference>
<organism>
    <name type="scientific">Geobacillus thermodenitrificans (strain NG80-2)</name>
    <dbReference type="NCBI Taxonomy" id="420246"/>
    <lineage>
        <taxon>Bacteria</taxon>
        <taxon>Bacillati</taxon>
        <taxon>Bacillota</taxon>
        <taxon>Bacilli</taxon>
        <taxon>Bacillales</taxon>
        <taxon>Anoxybacillaceae</taxon>
        <taxon>Geobacillus</taxon>
    </lineage>
</organism>